<comment type="function">
    <text evidence="1">Catalyzes the reductive methylation of 2'-deoxyuridine-5'-monophosphate (dUMP) to 2'-deoxythymidine-5'-monophosphate (dTMP) while utilizing 5,10-methylenetetrahydrofolate (mTHF) as the methyl donor and reductant in the reaction, yielding dihydrofolate (DHF) as a by-product. This enzymatic reaction provides an intracellular de novo source of dTMP, an essential precursor for DNA biosynthesis.</text>
</comment>
<comment type="catalytic activity">
    <reaction evidence="1">
        <text>dUMP + (6R)-5,10-methylene-5,6,7,8-tetrahydrofolate = 7,8-dihydrofolate + dTMP</text>
        <dbReference type="Rhea" id="RHEA:12104"/>
        <dbReference type="ChEBI" id="CHEBI:15636"/>
        <dbReference type="ChEBI" id="CHEBI:57451"/>
        <dbReference type="ChEBI" id="CHEBI:63528"/>
        <dbReference type="ChEBI" id="CHEBI:246422"/>
        <dbReference type="EC" id="2.1.1.45"/>
    </reaction>
</comment>
<comment type="pathway">
    <text evidence="1">Pyrimidine metabolism; dTTP biosynthesis.</text>
</comment>
<comment type="subunit">
    <text evidence="1">Homodimer.</text>
</comment>
<comment type="subcellular location">
    <subcellularLocation>
        <location evidence="1">Cytoplasm</location>
    </subcellularLocation>
</comment>
<comment type="similarity">
    <text evidence="1">Belongs to the thymidylate synthase family. Bacterial-type ThyA subfamily.</text>
</comment>
<accession>A9N980</accession>
<reference key="1">
    <citation type="submission" date="2007-11" db="EMBL/GenBank/DDBJ databases">
        <title>Genome sequencing of phylogenetically and phenotypically diverse Coxiella burnetii isolates.</title>
        <authorList>
            <person name="Seshadri R."/>
            <person name="Samuel J.E."/>
        </authorList>
    </citation>
    <scope>NUCLEOTIDE SEQUENCE [LARGE SCALE GENOMIC DNA]</scope>
    <source>
        <strain>RSA 331 / Henzerling II</strain>
    </source>
</reference>
<sequence length="264" mass="30439">MKEYLNFLQFILDHGVAKTDRTGIGTKSVFGYEMRFNLREGFPLVTTKKIHLKSVIYELLWFLRGDTNIQFLNDNGVTIWDEWADENGDLGPIYGKQWRRWHCPDGRTVDQMQRLIREIKTNPDSRRLIVSAWNVGELDQMALPPCHLLFQFYVADGFLSCKLTQRSADAFLGVPFNIASYSLLTHLIARQCNLKAGEFIWSGGDCHIYNTHQDQVSTQLSREPRALPQLIINRDPSSLYDYNFNDFSIVNYHPHPAIKAPVAV</sequence>
<organism>
    <name type="scientific">Coxiella burnetii (strain RSA 331 / Henzerling II)</name>
    <dbReference type="NCBI Taxonomy" id="360115"/>
    <lineage>
        <taxon>Bacteria</taxon>
        <taxon>Pseudomonadati</taxon>
        <taxon>Pseudomonadota</taxon>
        <taxon>Gammaproteobacteria</taxon>
        <taxon>Legionellales</taxon>
        <taxon>Coxiellaceae</taxon>
        <taxon>Coxiella</taxon>
    </lineage>
</organism>
<feature type="chain" id="PRO_1000073873" description="Thymidylate synthase">
    <location>
        <begin position="1"/>
        <end position="264"/>
    </location>
</feature>
<feature type="active site" description="Nucleophile" evidence="1">
    <location>
        <position position="146"/>
    </location>
</feature>
<feature type="binding site" description="in other chain" evidence="1">
    <location>
        <position position="21"/>
    </location>
    <ligand>
        <name>dUMP</name>
        <dbReference type="ChEBI" id="CHEBI:246422"/>
        <note>ligand shared between dimeric partners</note>
    </ligand>
</feature>
<feature type="binding site" evidence="1">
    <location>
        <position position="51"/>
    </location>
    <ligand>
        <name>(6R)-5,10-methylene-5,6,7,8-tetrahydrofolate</name>
        <dbReference type="ChEBI" id="CHEBI:15636"/>
    </ligand>
</feature>
<feature type="binding site" evidence="1">
    <location>
        <begin position="126"/>
        <end position="127"/>
    </location>
    <ligand>
        <name>dUMP</name>
        <dbReference type="ChEBI" id="CHEBI:246422"/>
        <note>ligand shared between dimeric partners</note>
    </ligand>
</feature>
<feature type="binding site" description="in other chain" evidence="1">
    <location>
        <begin position="166"/>
        <end position="169"/>
    </location>
    <ligand>
        <name>dUMP</name>
        <dbReference type="ChEBI" id="CHEBI:246422"/>
        <note>ligand shared between dimeric partners</note>
    </ligand>
</feature>
<feature type="binding site" evidence="1">
    <location>
        <position position="169"/>
    </location>
    <ligand>
        <name>(6R)-5,10-methylene-5,6,7,8-tetrahydrofolate</name>
        <dbReference type="ChEBI" id="CHEBI:15636"/>
    </ligand>
</feature>
<feature type="binding site" description="in other chain" evidence="1">
    <location>
        <position position="177"/>
    </location>
    <ligand>
        <name>dUMP</name>
        <dbReference type="ChEBI" id="CHEBI:246422"/>
        <note>ligand shared between dimeric partners</note>
    </ligand>
</feature>
<feature type="binding site" description="in other chain" evidence="1">
    <location>
        <begin position="207"/>
        <end position="209"/>
    </location>
    <ligand>
        <name>dUMP</name>
        <dbReference type="ChEBI" id="CHEBI:246422"/>
        <note>ligand shared between dimeric partners</note>
    </ligand>
</feature>
<feature type="binding site" evidence="1">
    <location>
        <position position="263"/>
    </location>
    <ligand>
        <name>(6R)-5,10-methylene-5,6,7,8-tetrahydrofolate</name>
        <dbReference type="ChEBI" id="CHEBI:15636"/>
    </ligand>
</feature>
<dbReference type="EC" id="2.1.1.45" evidence="1"/>
<dbReference type="EMBL" id="CP000890">
    <property type="protein sequence ID" value="ABX79121.1"/>
    <property type="molecule type" value="Genomic_DNA"/>
</dbReference>
<dbReference type="RefSeq" id="WP_005772639.1">
    <property type="nucleotide sequence ID" value="NC_010117.1"/>
</dbReference>
<dbReference type="SMR" id="A9N980"/>
<dbReference type="KEGG" id="cbs:COXBURSA331_A1731"/>
<dbReference type="HOGENOM" id="CLU_021669_0_0_6"/>
<dbReference type="UniPathway" id="UPA00575"/>
<dbReference type="GO" id="GO:0005829">
    <property type="term" value="C:cytosol"/>
    <property type="evidence" value="ECO:0007669"/>
    <property type="project" value="TreeGrafter"/>
</dbReference>
<dbReference type="GO" id="GO:0004799">
    <property type="term" value="F:thymidylate synthase activity"/>
    <property type="evidence" value="ECO:0007669"/>
    <property type="project" value="UniProtKB-UniRule"/>
</dbReference>
<dbReference type="GO" id="GO:0006231">
    <property type="term" value="P:dTMP biosynthetic process"/>
    <property type="evidence" value="ECO:0007669"/>
    <property type="project" value="UniProtKB-UniRule"/>
</dbReference>
<dbReference type="GO" id="GO:0006235">
    <property type="term" value="P:dTTP biosynthetic process"/>
    <property type="evidence" value="ECO:0007669"/>
    <property type="project" value="UniProtKB-UniRule"/>
</dbReference>
<dbReference type="GO" id="GO:0032259">
    <property type="term" value="P:methylation"/>
    <property type="evidence" value="ECO:0007669"/>
    <property type="project" value="UniProtKB-KW"/>
</dbReference>
<dbReference type="CDD" id="cd00351">
    <property type="entry name" value="TS_Pyrimidine_HMase"/>
    <property type="match status" value="1"/>
</dbReference>
<dbReference type="FunFam" id="3.30.572.10:FF:000013">
    <property type="entry name" value="Thymidylate synthase"/>
    <property type="match status" value="1"/>
</dbReference>
<dbReference type="Gene3D" id="3.30.572.10">
    <property type="entry name" value="Thymidylate synthase/dCMP hydroxymethylase domain"/>
    <property type="match status" value="1"/>
</dbReference>
<dbReference type="HAMAP" id="MF_00008">
    <property type="entry name" value="Thymidy_synth_bact"/>
    <property type="match status" value="1"/>
</dbReference>
<dbReference type="InterPro" id="IPR045097">
    <property type="entry name" value="Thymidate_synth/dCMP_Mease"/>
</dbReference>
<dbReference type="InterPro" id="IPR023451">
    <property type="entry name" value="Thymidate_synth/dCMP_Mease_dom"/>
</dbReference>
<dbReference type="InterPro" id="IPR036926">
    <property type="entry name" value="Thymidate_synth/dCMP_Mease_sf"/>
</dbReference>
<dbReference type="InterPro" id="IPR000398">
    <property type="entry name" value="Thymidylate_synthase"/>
</dbReference>
<dbReference type="InterPro" id="IPR020940">
    <property type="entry name" value="Thymidylate_synthase_AS"/>
</dbReference>
<dbReference type="NCBIfam" id="NF002497">
    <property type="entry name" value="PRK01827.1-3"/>
    <property type="match status" value="1"/>
</dbReference>
<dbReference type="NCBIfam" id="NF002499">
    <property type="entry name" value="PRK01827.1-5"/>
    <property type="match status" value="1"/>
</dbReference>
<dbReference type="NCBIfam" id="TIGR03284">
    <property type="entry name" value="thym_sym"/>
    <property type="match status" value="2"/>
</dbReference>
<dbReference type="PANTHER" id="PTHR11548:SF9">
    <property type="entry name" value="THYMIDYLATE SYNTHASE"/>
    <property type="match status" value="1"/>
</dbReference>
<dbReference type="PANTHER" id="PTHR11548">
    <property type="entry name" value="THYMIDYLATE SYNTHASE 1"/>
    <property type="match status" value="1"/>
</dbReference>
<dbReference type="Pfam" id="PF00303">
    <property type="entry name" value="Thymidylat_synt"/>
    <property type="match status" value="1"/>
</dbReference>
<dbReference type="PRINTS" id="PR00108">
    <property type="entry name" value="THYMDSNTHASE"/>
</dbReference>
<dbReference type="SUPFAM" id="SSF55831">
    <property type="entry name" value="Thymidylate synthase/dCMP hydroxymethylase"/>
    <property type="match status" value="1"/>
</dbReference>
<dbReference type="PROSITE" id="PS00091">
    <property type="entry name" value="THYMIDYLATE_SYNTHASE"/>
    <property type="match status" value="1"/>
</dbReference>
<gene>
    <name evidence="1" type="primary">thyA</name>
    <name type="ordered locus">COXBURSA331_A1731</name>
</gene>
<name>TYSY_COXBR</name>
<protein>
    <recommendedName>
        <fullName evidence="1">Thymidylate synthase</fullName>
        <shortName evidence="1">TS</shortName>
        <shortName evidence="1">TSase</shortName>
        <ecNumber evidence="1">2.1.1.45</ecNumber>
    </recommendedName>
</protein>
<evidence type="ECO:0000255" key="1">
    <source>
        <dbReference type="HAMAP-Rule" id="MF_00008"/>
    </source>
</evidence>
<keyword id="KW-0963">Cytoplasm</keyword>
<keyword id="KW-0489">Methyltransferase</keyword>
<keyword id="KW-0545">Nucleotide biosynthesis</keyword>
<keyword id="KW-0808">Transferase</keyword>
<proteinExistence type="inferred from homology"/>